<feature type="chain" id="PRO_0000359264" description="Acireductone dioxygenase">
    <location>
        <begin position="1"/>
        <end position="180"/>
    </location>
</feature>
<feature type="binding site" evidence="1">
    <location>
        <position position="97"/>
    </location>
    <ligand>
        <name>Fe(2+)</name>
        <dbReference type="ChEBI" id="CHEBI:29033"/>
    </ligand>
</feature>
<feature type="binding site" evidence="1">
    <location>
        <position position="97"/>
    </location>
    <ligand>
        <name>Ni(2+)</name>
        <dbReference type="ChEBI" id="CHEBI:49786"/>
    </ligand>
</feature>
<feature type="binding site" evidence="1">
    <location>
        <position position="99"/>
    </location>
    <ligand>
        <name>Fe(2+)</name>
        <dbReference type="ChEBI" id="CHEBI:29033"/>
    </ligand>
</feature>
<feature type="binding site" evidence="1">
    <location>
        <position position="99"/>
    </location>
    <ligand>
        <name>Ni(2+)</name>
        <dbReference type="ChEBI" id="CHEBI:49786"/>
    </ligand>
</feature>
<feature type="binding site" evidence="1">
    <location>
        <position position="103"/>
    </location>
    <ligand>
        <name>Fe(2+)</name>
        <dbReference type="ChEBI" id="CHEBI:29033"/>
    </ligand>
</feature>
<feature type="binding site" evidence="1">
    <location>
        <position position="103"/>
    </location>
    <ligand>
        <name>Ni(2+)</name>
        <dbReference type="ChEBI" id="CHEBI:49786"/>
    </ligand>
</feature>
<feature type="binding site" evidence="1">
    <location>
        <position position="141"/>
    </location>
    <ligand>
        <name>Fe(2+)</name>
        <dbReference type="ChEBI" id="CHEBI:29033"/>
    </ligand>
</feature>
<feature type="binding site" evidence="1">
    <location>
        <position position="141"/>
    </location>
    <ligand>
        <name>Ni(2+)</name>
        <dbReference type="ChEBI" id="CHEBI:49786"/>
    </ligand>
</feature>
<feature type="site" description="May play a role in metal incorporation in vivo" evidence="1">
    <location>
        <position position="96"/>
    </location>
</feature>
<feature type="site" description="May play a role in transmitting local conformational changes" evidence="1">
    <location>
        <position position="102"/>
    </location>
</feature>
<feature type="site" description="Important to generate the dianion" evidence="1">
    <location>
        <position position="105"/>
    </location>
</feature>
<organism>
    <name type="scientific">Yersinia pseudotuberculosis serotype O:3 (strain YPIII)</name>
    <dbReference type="NCBI Taxonomy" id="502800"/>
    <lineage>
        <taxon>Bacteria</taxon>
        <taxon>Pseudomonadati</taxon>
        <taxon>Pseudomonadota</taxon>
        <taxon>Gammaproteobacteria</taxon>
        <taxon>Enterobacterales</taxon>
        <taxon>Yersiniaceae</taxon>
        <taxon>Yersinia</taxon>
    </lineage>
</organism>
<evidence type="ECO:0000255" key="1">
    <source>
        <dbReference type="HAMAP-Rule" id="MF_01682"/>
    </source>
</evidence>
<keyword id="KW-0028">Amino-acid biosynthesis</keyword>
<keyword id="KW-0223">Dioxygenase</keyword>
<keyword id="KW-0408">Iron</keyword>
<keyword id="KW-0479">Metal-binding</keyword>
<keyword id="KW-0486">Methionine biosynthesis</keyword>
<keyword id="KW-0533">Nickel</keyword>
<keyword id="KW-0560">Oxidoreductase</keyword>
<name>MTND_YERPY</name>
<proteinExistence type="inferred from homology"/>
<protein>
    <recommendedName>
        <fullName evidence="1">Acireductone dioxygenase</fullName>
    </recommendedName>
    <alternativeName>
        <fullName evidence="1">1,2-dihydroxy-3-keto-5-methylthiopentene dioxygenase</fullName>
        <shortName evidence="1">DHK-MTPene dioxygenase</shortName>
    </alternativeName>
    <alternativeName>
        <fullName evidence="1">Acireductone dioxygenase (Fe(2+)-requiring)</fullName>
        <shortName evidence="1">ARD'</shortName>
        <shortName evidence="1">Fe-ARD</shortName>
        <ecNumber evidence="1">1.13.11.54</ecNumber>
    </alternativeName>
    <alternativeName>
        <fullName evidence="1">Acireductone dioxygenase (Ni(2+)-requiring)</fullName>
        <shortName evidence="1">ARD</shortName>
        <shortName evidence="1">Ni-ARD</shortName>
        <ecNumber evidence="1">1.13.11.53</ecNumber>
    </alternativeName>
</protein>
<sequence>MSGLTIFSDQQPEKPLWQSHDAEEIQQQLTAIGVRFERWQADCELGENPQPEAVIAAYQHEIDRLVAENGYKSWDVISMRPDNPQREALREKFLSEHTHGEDEVRFFVEGSGLFCLHLNEKVYQILCEKNDLLSVPADIPHWFDMGSAPNFTAIRVFDNPEGWIARSTGDNIADGYPRLA</sequence>
<reference key="1">
    <citation type="submission" date="2008-02" db="EMBL/GenBank/DDBJ databases">
        <title>Complete sequence of Yersinia pseudotuberculosis YPIII.</title>
        <authorList>
            <consortium name="US DOE Joint Genome Institute"/>
            <person name="Copeland A."/>
            <person name="Lucas S."/>
            <person name="Lapidus A."/>
            <person name="Glavina del Rio T."/>
            <person name="Dalin E."/>
            <person name="Tice H."/>
            <person name="Bruce D."/>
            <person name="Goodwin L."/>
            <person name="Pitluck S."/>
            <person name="Munk A.C."/>
            <person name="Brettin T."/>
            <person name="Detter J.C."/>
            <person name="Han C."/>
            <person name="Tapia R."/>
            <person name="Schmutz J."/>
            <person name="Larimer F."/>
            <person name="Land M."/>
            <person name="Hauser L."/>
            <person name="Challacombe J.F."/>
            <person name="Green L."/>
            <person name="Lindler L.E."/>
            <person name="Nikolich M.P."/>
            <person name="Richardson P."/>
        </authorList>
    </citation>
    <scope>NUCLEOTIDE SEQUENCE [LARGE SCALE GENOMIC DNA]</scope>
    <source>
        <strain>YPIII</strain>
    </source>
</reference>
<dbReference type="EC" id="1.13.11.54" evidence="1"/>
<dbReference type="EC" id="1.13.11.53" evidence="1"/>
<dbReference type="EMBL" id="CP000950">
    <property type="protein sequence ID" value="ACA69588.1"/>
    <property type="molecule type" value="Genomic_DNA"/>
</dbReference>
<dbReference type="RefSeq" id="WP_012304529.1">
    <property type="nucleotide sequence ID" value="NZ_CP009792.1"/>
</dbReference>
<dbReference type="SMR" id="B1JIK4"/>
<dbReference type="KEGG" id="ypy:YPK_3319"/>
<dbReference type="PATRIC" id="fig|502800.11.peg.4054"/>
<dbReference type="UniPathway" id="UPA00904">
    <property type="reaction ID" value="UER00878"/>
</dbReference>
<dbReference type="GO" id="GO:0010308">
    <property type="term" value="F:acireductone dioxygenase (Ni2+-requiring) activity"/>
    <property type="evidence" value="ECO:0007669"/>
    <property type="project" value="UniProtKB-UniRule"/>
</dbReference>
<dbReference type="GO" id="GO:0010309">
    <property type="term" value="F:acireductone dioxygenase [iron(II)-requiring] activity"/>
    <property type="evidence" value="ECO:0007669"/>
    <property type="project" value="UniProtKB-UniRule"/>
</dbReference>
<dbReference type="GO" id="GO:0005506">
    <property type="term" value="F:iron ion binding"/>
    <property type="evidence" value="ECO:0007669"/>
    <property type="project" value="UniProtKB-UniRule"/>
</dbReference>
<dbReference type="GO" id="GO:0016151">
    <property type="term" value="F:nickel cation binding"/>
    <property type="evidence" value="ECO:0007669"/>
    <property type="project" value="UniProtKB-UniRule"/>
</dbReference>
<dbReference type="GO" id="GO:0019509">
    <property type="term" value="P:L-methionine salvage from methylthioadenosine"/>
    <property type="evidence" value="ECO:0007669"/>
    <property type="project" value="UniProtKB-UniRule"/>
</dbReference>
<dbReference type="GO" id="GO:0019284">
    <property type="term" value="P:L-methionine salvage from S-adenosylmethionine"/>
    <property type="evidence" value="ECO:0007669"/>
    <property type="project" value="InterPro"/>
</dbReference>
<dbReference type="CDD" id="cd02232">
    <property type="entry name" value="cupin_ARD"/>
    <property type="match status" value="1"/>
</dbReference>
<dbReference type="Gene3D" id="2.60.120.10">
    <property type="entry name" value="Jelly Rolls"/>
    <property type="match status" value="1"/>
</dbReference>
<dbReference type="HAMAP" id="MF_01682">
    <property type="entry name" value="Salvage_MtnD"/>
    <property type="match status" value="1"/>
</dbReference>
<dbReference type="InterPro" id="IPR004313">
    <property type="entry name" value="ARD"/>
</dbReference>
<dbReference type="InterPro" id="IPR023956">
    <property type="entry name" value="ARD_bac"/>
</dbReference>
<dbReference type="InterPro" id="IPR014710">
    <property type="entry name" value="RmlC-like_jellyroll"/>
</dbReference>
<dbReference type="InterPro" id="IPR011051">
    <property type="entry name" value="RmlC_Cupin_sf"/>
</dbReference>
<dbReference type="PANTHER" id="PTHR23418">
    <property type="entry name" value="ACIREDUCTONE DIOXYGENASE"/>
    <property type="match status" value="1"/>
</dbReference>
<dbReference type="PANTHER" id="PTHR23418:SF0">
    <property type="entry name" value="ACIREDUCTONE DIOXYGENASE"/>
    <property type="match status" value="1"/>
</dbReference>
<dbReference type="Pfam" id="PF03079">
    <property type="entry name" value="ARD"/>
    <property type="match status" value="1"/>
</dbReference>
<dbReference type="SUPFAM" id="SSF51182">
    <property type="entry name" value="RmlC-like cupins"/>
    <property type="match status" value="1"/>
</dbReference>
<accession>B1JIK4</accession>
<comment type="function">
    <text evidence="1">Catalyzes 2 different reactions between oxygen and the acireductone 1,2-dihydroxy-3-keto-5-methylthiopentene (DHK-MTPene) depending upon the metal bound in the active site. Fe-containing acireductone dioxygenase (Fe-ARD) produces formate and 2-keto-4-methylthiobutyrate (KMTB), the alpha-ketoacid precursor of methionine in the methionine recycle pathway. Ni-containing acireductone dioxygenase (Ni-ARD) produces methylthiopropionate, carbon monoxide and formate, and does not lie on the methionine recycle pathway.</text>
</comment>
<comment type="catalytic activity">
    <reaction evidence="1">
        <text>1,2-dihydroxy-5-(methylsulfanyl)pent-1-en-3-one + O2 = 3-(methylsulfanyl)propanoate + CO + formate + 2 H(+)</text>
        <dbReference type="Rhea" id="RHEA:14161"/>
        <dbReference type="ChEBI" id="CHEBI:15378"/>
        <dbReference type="ChEBI" id="CHEBI:15379"/>
        <dbReference type="ChEBI" id="CHEBI:15740"/>
        <dbReference type="ChEBI" id="CHEBI:17245"/>
        <dbReference type="ChEBI" id="CHEBI:49016"/>
        <dbReference type="ChEBI" id="CHEBI:49252"/>
        <dbReference type="EC" id="1.13.11.53"/>
    </reaction>
</comment>
<comment type="catalytic activity">
    <reaction evidence="1">
        <text>1,2-dihydroxy-5-(methylsulfanyl)pent-1-en-3-one + O2 = 4-methylsulfanyl-2-oxobutanoate + formate + 2 H(+)</text>
        <dbReference type="Rhea" id="RHEA:24504"/>
        <dbReference type="ChEBI" id="CHEBI:15378"/>
        <dbReference type="ChEBI" id="CHEBI:15379"/>
        <dbReference type="ChEBI" id="CHEBI:15740"/>
        <dbReference type="ChEBI" id="CHEBI:16723"/>
        <dbReference type="ChEBI" id="CHEBI:49252"/>
        <dbReference type="EC" id="1.13.11.54"/>
    </reaction>
</comment>
<comment type="cofactor">
    <cofactor evidence="1">
        <name>Fe(2+)</name>
        <dbReference type="ChEBI" id="CHEBI:29033"/>
    </cofactor>
    <text evidence="1">Binds 1 Fe(2+) cation per monomer.</text>
</comment>
<comment type="cofactor">
    <cofactor evidence="1">
        <name>Ni(2+)</name>
        <dbReference type="ChEBI" id="CHEBI:49786"/>
    </cofactor>
    <text evidence="1">Binds 1 nickel ion per monomer.</text>
</comment>
<comment type="pathway">
    <text evidence="1">Amino-acid biosynthesis; L-methionine biosynthesis via salvage pathway; L-methionine from S-methyl-5-thio-alpha-D-ribose 1-phosphate: step 5/6.</text>
</comment>
<comment type="subunit">
    <text evidence="1">Monomer.</text>
</comment>
<comment type="similarity">
    <text evidence="1">Belongs to the acireductone dioxygenase (ARD) family.</text>
</comment>
<gene>
    <name evidence="1" type="primary">mtnD</name>
    <name type="ordered locus">YPK_3319</name>
</gene>